<organism>
    <name type="scientific">Homo sapiens</name>
    <name type="common">Human</name>
    <dbReference type="NCBI Taxonomy" id="9606"/>
    <lineage>
        <taxon>Eukaryota</taxon>
        <taxon>Metazoa</taxon>
        <taxon>Chordata</taxon>
        <taxon>Craniata</taxon>
        <taxon>Vertebrata</taxon>
        <taxon>Euteleostomi</taxon>
        <taxon>Mammalia</taxon>
        <taxon>Eutheria</taxon>
        <taxon>Euarchontoglires</taxon>
        <taxon>Primates</taxon>
        <taxon>Haplorrhini</taxon>
        <taxon>Catarrhini</taxon>
        <taxon>Hominidae</taxon>
        <taxon>Homo</taxon>
    </lineage>
</organism>
<proteinExistence type="evidence at transcript level"/>
<keyword id="KW-1185">Reference proteome</keyword>
<protein>
    <recommendedName>
        <fullName>NUT family member 2F</fullName>
    </recommendedName>
</protein>
<comment type="similarity">
    <text evidence="4">Belongs to the NUT family.</text>
</comment>
<evidence type="ECO:0000256" key="1">
    <source>
        <dbReference type="SAM" id="MobiDB-lite"/>
    </source>
</evidence>
<evidence type="ECO:0000269" key="2">
    <source>
    </source>
</evidence>
<evidence type="ECO:0000269" key="3">
    <source>
    </source>
</evidence>
<evidence type="ECO:0000305" key="4"/>
<accession>A1L443</accession>
<accession>B6ZDF0</accession>
<accession>Q5SR58</accession>
<accession>Q5SR59</accession>
<accession>Q9UFB1</accession>
<name>NTM2F_HUMAN</name>
<reference key="1">
    <citation type="journal article" date="2004" name="Nature">
        <title>DNA sequence and analysis of human chromosome 9.</title>
        <authorList>
            <person name="Humphray S.J."/>
            <person name="Oliver K."/>
            <person name="Hunt A.R."/>
            <person name="Plumb R.W."/>
            <person name="Loveland J.E."/>
            <person name="Howe K.L."/>
            <person name="Andrews T.D."/>
            <person name="Searle S."/>
            <person name="Hunt S.E."/>
            <person name="Scott C.E."/>
            <person name="Jones M.C."/>
            <person name="Ainscough R."/>
            <person name="Almeida J.P."/>
            <person name="Ambrose K.D."/>
            <person name="Ashwell R.I.S."/>
            <person name="Babbage A.K."/>
            <person name="Babbage S."/>
            <person name="Bagguley C.L."/>
            <person name="Bailey J."/>
            <person name="Banerjee R."/>
            <person name="Barker D.J."/>
            <person name="Barlow K.F."/>
            <person name="Bates K."/>
            <person name="Beasley H."/>
            <person name="Beasley O."/>
            <person name="Bird C.P."/>
            <person name="Bray-Allen S."/>
            <person name="Brown A.J."/>
            <person name="Brown J.Y."/>
            <person name="Burford D."/>
            <person name="Burrill W."/>
            <person name="Burton J."/>
            <person name="Carder C."/>
            <person name="Carter N.P."/>
            <person name="Chapman J.C."/>
            <person name="Chen Y."/>
            <person name="Clarke G."/>
            <person name="Clark S.Y."/>
            <person name="Clee C.M."/>
            <person name="Clegg S."/>
            <person name="Collier R.E."/>
            <person name="Corby N."/>
            <person name="Crosier M."/>
            <person name="Cummings A.T."/>
            <person name="Davies J."/>
            <person name="Dhami P."/>
            <person name="Dunn M."/>
            <person name="Dutta I."/>
            <person name="Dyer L.W."/>
            <person name="Earthrowl M.E."/>
            <person name="Faulkner L."/>
            <person name="Fleming C.J."/>
            <person name="Frankish A."/>
            <person name="Frankland J.A."/>
            <person name="French L."/>
            <person name="Fricker D.G."/>
            <person name="Garner P."/>
            <person name="Garnett J."/>
            <person name="Ghori J."/>
            <person name="Gilbert J.G.R."/>
            <person name="Glison C."/>
            <person name="Grafham D.V."/>
            <person name="Gribble S."/>
            <person name="Griffiths C."/>
            <person name="Griffiths-Jones S."/>
            <person name="Grocock R."/>
            <person name="Guy J."/>
            <person name="Hall R.E."/>
            <person name="Hammond S."/>
            <person name="Harley J.L."/>
            <person name="Harrison E.S.I."/>
            <person name="Hart E.A."/>
            <person name="Heath P.D."/>
            <person name="Henderson C.D."/>
            <person name="Hopkins B.L."/>
            <person name="Howard P.J."/>
            <person name="Howden P.J."/>
            <person name="Huckle E."/>
            <person name="Johnson C."/>
            <person name="Johnson D."/>
            <person name="Joy A.A."/>
            <person name="Kay M."/>
            <person name="Keenan S."/>
            <person name="Kershaw J.K."/>
            <person name="Kimberley A.M."/>
            <person name="King A."/>
            <person name="Knights A."/>
            <person name="Laird G.K."/>
            <person name="Langford C."/>
            <person name="Lawlor S."/>
            <person name="Leongamornlert D.A."/>
            <person name="Leversha M."/>
            <person name="Lloyd C."/>
            <person name="Lloyd D.M."/>
            <person name="Lovell J."/>
            <person name="Martin S."/>
            <person name="Mashreghi-Mohammadi M."/>
            <person name="Matthews L."/>
            <person name="McLaren S."/>
            <person name="McLay K.E."/>
            <person name="McMurray A."/>
            <person name="Milne S."/>
            <person name="Nickerson T."/>
            <person name="Nisbett J."/>
            <person name="Nordsiek G."/>
            <person name="Pearce A.V."/>
            <person name="Peck A.I."/>
            <person name="Porter K.M."/>
            <person name="Pandian R."/>
            <person name="Pelan S."/>
            <person name="Phillimore B."/>
            <person name="Povey S."/>
            <person name="Ramsey Y."/>
            <person name="Rand V."/>
            <person name="Scharfe M."/>
            <person name="Sehra H.K."/>
            <person name="Shownkeen R."/>
            <person name="Sims S.K."/>
            <person name="Skuce C.D."/>
            <person name="Smith M."/>
            <person name="Steward C.A."/>
            <person name="Swarbreck D."/>
            <person name="Sycamore N."/>
            <person name="Tester J."/>
            <person name="Thorpe A."/>
            <person name="Tracey A."/>
            <person name="Tromans A."/>
            <person name="Thomas D.W."/>
            <person name="Wall M."/>
            <person name="Wallis J.M."/>
            <person name="West A.P."/>
            <person name="Whitehead S.L."/>
            <person name="Willey D.L."/>
            <person name="Williams S.A."/>
            <person name="Wilming L."/>
            <person name="Wray P.W."/>
            <person name="Young L."/>
            <person name="Ashurst J.L."/>
            <person name="Coulson A."/>
            <person name="Blocker H."/>
            <person name="Durbin R.M."/>
            <person name="Sulston J.E."/>
            <person name="Hubbard T."/>
            <person name="Jackson M.J."/>
            <person name="Bentley D.R."/>
            <person name="Beck S."/>
            <person name="Rogers J."/>
            <person name="Dunham I."/>
        </authorList>
    </citation>
    <scope>NUCLEOTIDE SEQUENCE [LARGE SCALE GENOMIC DNA]</scope>
</reference>
<reference key="2">
    <citation type="journal article" date="2004" name="Genome Res.">
        <title>The status, quality, and expansion of the NIH full-length cDNA project: the Mammalian Gene Collection (MGC).</title>
        <authorList>
            <consortium name="The MGC Project Team"/>
        </authorList>
    </citation>
    <scope>NUCLEOTIDE SEQUENCE [LARGE SCALE MRNA]</scope>
    <scope>VARIANT GLY-176</scope>
</reference>
<reference key="3">
    <citation type="journal article" date="2007" name="BMC Genomics">
        <title>The full-ORF clone resource of the German cDNA consortium.</title>
        <authorList>
            <person name="Bechtel S."/>
            <person name="Rosenfelder H."/>
            <person name="Duda A."/>
            <person name="Schmidt C.P."/>
            <person name="Ernst U."/>
            <person name="Wellenreuther R."/>
            <person name="Mehrle A."/>
            <person name="Schuster C."/>
            <person name="Bahr A."/>
            <person name="Bloecker H."/>
            <person name="Heubner D."/>
            <person name="Hoerlein A."/>
            <person name="Michel G."/>
            <person name="Wedler H."/>
            <person name="Koehrer K."/>
            <person name="Ottenwaelder B."/>
            <person name="Poustka A."/>
            <person name="Wiemann S."/>
            <person name="Schupp I."/>
        </authorList>
    </citation>
    <scope>NUCLEOTIDE SEQUENCE [LARGE SCALE MRNA] OF 143-755</scope>
    <scope>VARIANT GLY-176</scope>
    <source>
        <tissue>Testis</tissue>
    </source>
</reference>
<dbReference type="EMBL" id="AL691447">
    <property type="status" value="NOT_ANNOTATED_CDS"/>
    <property type="molecule type" value="Genomic_DNA"/>
</dbReference>
<dbReference type="EMBL" id="BC130390">
    <property type="protein sequence ID" value="AAI30391.1"/>
    <property type="molecule type" value="mRNA"/>
</dbReference>
<dbReference type="EMBL" id="AL133071">
    <property type="protein sequence ID" value="CAB61394.1"/>
    <property type="molecule type" value="mRNA"/>
</dbReference>
<dbReference type="CCDS" id="CCDS47994.1"/>
<dbReference type="PIR" id="T42671">
    <property type="entry name" value="T42671"/>
</dbReference>
<dbReference type="RefSeq" id="NP_060031.1">
    <property type="nucleotide sequence ID" value="NM_017561.2"/>
</dbReference>
<dbReference type="SMR" id="A1L443"/>
<dbReference type="BioGRID" id="120131">
    <property type="interactions" value="44"/>
</dbReference>
<dbReference type="FunCoup" id="A1L443">
    <property type="interactions" value="16"/>
</dbReference>
<dbReference type="IntAct" id="A1L443">
    <property type="interactions" value="25"/>
</dbReference>
<dbReference type="STRING" id="9606.ENSP00000253262"/>
<dbReference type="GlyGen" id="A1L443">
    <property type="glycosylation" value="1 site"/>
</dbReference>
<dbReference type="iPTMnet" id="A1L443"/>
<dbReference type="PhosphoSitePlus" id="A1L443"/>
<dbReference type="BioMuta" id="NUTM2F"/>
<dbReference type="jPOST" id="A1L443"/>
<dbReference type="MassIVE" id="A1L443"/>
<dbReference type="PaxDb" id="9606-ENSP00000253262"/>
<dbReference type="PeptideAtlas" id="A1L443"/>
<dbReference type="Antibodypedia" id="68451">
    <property type="antibodies" value="27 antibodies from 6 providers"/>
</dbReference>
<dbReference type="DNASU" id="54754"/>
<dbReference type="Ensembl" id="ENST00000253262.9">
    <property type="protein sequence ID" value="ENSP00000253262.4"/>
    <property type="gene ID" value="ENSG00000130950.15"/>
</dbReference>
<dbReference type="GeneID" id="54754"/>
<dbReference type="KEGG" id="hsa:54754"/>
<dbReference type="MANE-Select" id="ENST00000253262.9">
    <property type="protein sequence ID" value="ENSP00000253262.4"/>
    <property type="RefSeq nucleotide sequence ID" value="NM_017561.2"/>
    <property type="RefSeq protein sequence ID" value="NP_060031.1"/>
</dbReference>
<dbReference type="UCSC" id="uc004aup.1">
    <property type="organism name" value="human"/>
</dbReference>
<dbReference type="AGR" id="HGNC:23450"/>
<dbReference type="CTD" id="54754"/>
<dbReference type="DisGeNET" id="54754"/>
<dbReference type="GeneCards" id="NUTM2F"/>
<dbReference type="HGNC" id="HGNC:23450">
    <property type="gene designation" value="NUTM2F"/>
</dbReference>
<dbReference type="HPA" id="ENSG00000130950">
    <property type="expression patterns" value="Tissue enriched (testis)"/>
</dbReference>
<dbReference type="neXtProt" id="NX_A1L443"/>
<dbReference type="OpenTargets" id="ENSG00000130950"/>
<dbReference type="PharmGKB" id="PA134981634"/>
<dbReference type="VEuPathDB" id="HostDB:ENSG00000130950"/>
<dbReference type="eggNOG" id="ENOG502RU0F">
    <property type="taxonomic scope" value="Eukaryota"/>
</dbReference>
<dbReference type="GeneTree" id="ENSGT00410000025793"/>
<dbReference type="HOGENOM" id="CLU_021726_0_0_1"/>
<dbReference type="InParanoid" id="A1L443"/>
<dbReference type="OMA" id="IGMETCP"/>
<dbReference type="OrthoDB" id="15628at9604"/>
<dbReference type="PAN-GO" id="A1L443">
    <property type="GO annotations" value="0 GO annotations based on evolutionary models"/>
</dbReference>
<dbReference type="PhylomeDB" id="A1L443"/>
<dbReference type="TreeFam" id="TF337728"/>
<dbReference type="PathwayCommons" id="A1L443"/>
<dbReference type="SignaLink" id="A1L443"/>
<dbReference type="BioGRID-ORCS" id="54754">
    <property type="hits" value="53 hits in 1025 CRISPR screens"/>
</dbReference>
<dbReference type="GenomeRNAi" id="54754"/>
<dbReference type="Pharos" id="A1L443">
    <property type="development level" value="Tdark"/>
</dbReference>
<dbReference type="PRO" id="PR:A1L443"/>
<dbReference type="Proteomes" id="UP000005640">
    <property type="component" value="Chromosome 9"/>
</dbReference>
<dbReference type="RNAct" id="A1L443">
    <property type="molecule type" value="protein"/>
</dbReference>
<dbReference type="Bgee" id="ENSG00000130950">
    <property type="expression patterns" value="Expressed in left testis and 8 other cell types or tissues"/>
</dbReference>
<dbReference type="ExpressionAtlas" id="A1L443">
    <property type="expression patterns" value="baseline and differential"/>
</dbReference>
<dbReference type="InterPro" id="IPR024310">
    <property type="entry name" value="NUT"/>
</dbReference>
<dbReference type="InterPro" id="IPR024309">
    <property type="entry name" value="NUT_N"/>
</dbReference>
<dbReference type="PANTHER" id="PTHR22879">
    <property type="entry name" value="NUT FAMILY MEMBER 1"/>
    <property type="match status" value="1"/>
</dbReference>
<dbReference type="PANTHER" id="PTHR22879:SF2">
    <property type="entry name" value="NUT FAMILY MEMBER 2F-RELATED"/>
    <property type="match status" value="1"/>
</dbReference>
<dbReference type="Pfam" id="PF12881">
    <property type="entry name" value="NUT"/>
    <property type="match status" value="1"/>
</dbReference>
<feature type="chain" id="PRO_0000337995" description="NUT family member 2F">
    <location>
        <begin position="1"/>
        <end position="756"/>
    </location>
</feature>
<feature type="region of interest" description="Disordered" evidence="1">
    <location>
        <begin position="173"/>
        <end position="200"/>
    </location>
</feature>
<feature type="region of interest" description="Disordered" evidence="1">
    <location>
        <begin position="293"/>
        <end position="438"/>
    </location>
</feature>
<feature type="region of interest" description="Disordered" evidence="1">
    <location>
        <begin position="511"/>
        <end position="639"/>
    </location>
</feature>
<feature type="region of interest" description="Disordered" evidence="1">
    <location>
        <begin position="653"/>
        <end position="756"/>
    </location>
</feature>
<feature type="compositionally biased region" description="Pro residues" evidence="1">
    <location>
        <begin position="304"/>
        <end position="321"/>
    </location>
</feature>
<feature type="compositionally biased region" description="Basic and acidic residues" evidence="1">
    <location>
        <begin position="417"/>
        <end position="427"/>
    </location>
</feature>
<feature type="compositionally biased region" description="Polar residues" evidence="1">
    <location>
        <begin position="543"/>
        <end position="560"/>
    </location>
</feature>
<feature type="compositionally biased region" description="Low complexity" evidence="1">
    <location>
        <begin position="654"/>
        <end position="665"/>
    </location>
</feature>
<feature type="compositionally biased region" description="Basic residues" evidence="1">
    <location>
        <begin position="746"/>
        <end position="756"/>
    </location>
</feature>
<feature type="sequence variant" id="VAR_068009" description="In dbSNP:rs202099818.">
    <original>S</original>
    <variation>C</variation>
    <location>
        <position position="137"/>
    </location>
</feature>
<feature type="sequence variant" id="VAR_068010" description="In dbSNP:rs190275133." evidence="2 3">
    <original>R</original>
    <variation>G</variation>
    <location>
        <position position="176"/>
    </location>
</feature>
<feature type="sequence conflict" description="In Ref. 2; AAI30391." evidence="4" ref="2">
    <original>L</original>
    <variation>F</variation>
    <location>
        <position position="126"/>
    </location>
</feature>
<feature type="sequence conflict" description="In Ref. 2; AAI30391 and 3; CAB61394." evidence="4" ref="2 3">
    <location>
        <position position="691"/>
    </location>
</feature>
<feature type="sequence conflict" description="In Ref. 3; CAB61394." evidence="4" ref="3">
    <original>G</original>
    <variation>R</variation>
    <location>
        <position position="731"/>
    </location>
</feature>
<gene>
    <name type="primary">NUTM2F</name>
    <name type="synonym">FAM22F</name>
</gene>
<sequence>MASNGAYPVLGPGVTVNPGTSLSVFTALPFATPAPGPAHRPPLVTAVVPPAGPLVLSAFPSTPLVAGQDGRGPSGAGASNVFVQMRTEVGPVKPPQAQTLILTQAPLVWQAPGTLCGGVMCPPPLLLAAAPGVPVTSAQVVGGTQACEGGWSHGLPLPPPPPAAQVAPIVSPGNARPWPQGAHGEGSLAPSQAKARPDDSCKPKSVYENFRLWQHYKPLARRHLPQSPDTEALSCFLIPVLRSLARRKPTMTLEEGLWQAMREWQHTSNFDRMIFYEMAEKFLEFEAEEEMQIQKSQWMKGPQSLPPPAPPRLEPRGPPAPEVVKQPVYLPSKDGPKAPTACLPPPRPQRPAETKAHLPPPRPQRPAETNAHLPPPRPQRPAETKVPEEIPPEVVQEYVDIMEELLGSHPGDTGEPEGQREKGKVEQPQEEDGITSDPGLLSYIDKLCSQEDFVTKVEAVIHPRFLEELLSPDPQMDFLALSQELEQEEGLTLAQLVEKRLLSLKEKGCGRAAPRHGTARLDSSPSEFAAGQEAAREVPDPQQRVSVETSPPQTAAQDPQGQGRVRTGMARSEDPAVLLGCQDSPRLKAVRPTSPPQDHRPTCPGLGTKDALGLPGESPVKESHGLAKGSSEETELPGMVYVVGSHHRLRPWRLSQSPVPSSGLLSPGGRGPQGALQSPSAQKRGLSPSPSPASKSKKRPLFGSPSPAEKTPHPGPGLRVSGEQSLAWGLGGPSQSQKRKGDPLASRRKKKRHCSQ</sequence>